<comment type="catalytic activity">
    <reaction evidence="1">
        <text>D-glucose + ATP = D-glucose 6-phosphate + ADP + H(+)</text>
        <dbReference type="Rhea" id="RHEA:17825"/>
        <dbReference type="ChEBI" id="CHEBI:4167"/>
        <dbReference type="ChEBI" id="CHEBI:15378"/>
        <dbReference type="ChEBI" id="CHEBI:30616"/>
        <dbReference type="ChEBI" id="CHEBI:61548"/>
        <dbReference type="ChEBI" id="CHEBI:456216"/>
        <dbReference type="EC" id="2.7.1.2"/>
    </reaction>
</comment>
<comment type="subcellular location">
    <subcellularLocation>
        <location evidence="1">Cytoplasm</location>
    </subcellularLocation>
</comment>
<comment type="similarity">
    <text evidence="1">Belongs to the bacterial glucokinase family.</text>
</comment>
<dbReference type="EC" id="2.7.1.2" evidence="1"/>
<dbReference type="EMBL" id="CU928145">
    <property type="protein sequence ID" value="CAU98549.1"/>
    <property type="molecule type" value="Genomic_DNA"/>
</dbReference>
<dbReference type="RefSeq" id="WP_000170346.1">
    <property type="nucleotide sequence ID" value="NC_011748.1"/>
</dbReference>
<dbReference type="SMR" id="B7LCE0"/>
<dbReference type="GeneID" id="75202543"/>
<dbReference type="KEGG" id="eck:EC55989_2684"/>
<dbReference type="HOGENOM" id="CLU_042582_1_0_6"/>
<dbReference type="Proteomes" id="UP000000746">
    <property type="component" value="Chromosome"/>
</dbReference>
<dbReference type="GO" id="GO:0005829">
    <property type="term" value="C:cytosol"/>
    <property type="evidence" value="ECO:0007669"/>
    <property type="project" value="TreeGrafter"/>
</dbReference>
<dbReference type="GO" id="GO:0005524">
    <property type="term" value="F:ATP binding"/>
    <property type="evidence" value="ECO:0007669"/>
    <property type="project" value="UniProtKB-UniRule"/>
</dbReference>
<dbReference type="GO" id="GO:0005536">
    <property type="term" value="F:D-glucose binding"/>
    <property type="evidence" value="ECO:0007669"/>
    <property type="project" value="InterPro"/>
</dbReference>
<dbReference type="GO" id="GO:0004340">
    <property type="term" value="F:glucokinase activity"/>
    <property type="evidence" value="ECO:0007669"/>
    <property type="project" value="UniProtKB-UniRule"/>
</dbReference>
<dbReference type="GO" id="GO:0006096">
    <property type="term" value="P:glycolytic process"/>
    <property type="evidence" value="ECO:0007669"/>
    <property type="project" value="UniProtKB-UniRule"/>
</dbReference>
<dbReference type="CDD" id="cd24008">
    <property type="entry name" value="ASKHA_NBD_GLK"/>
    <property type="match status" value="1"/>
</dbReference>
<dbReference type="FunFam" id="3.30.420.40:FF:000045">
    <property type="entry name" value="Glucokinase"/>
    <property type="match status" value="1"/>
</dbReference>
<dbReference type="FunFam" id="3.40.367.20:FF:000002">
    <property type="entry name" value="Glucokinase"/>
    <property type="match status" value="1"/>
</dbReference>
<dbReference type="Gene3D" id="3.30.420.40">
    <property type="match status" value="1"/>
</dbReference>
<dbReference type="Gene3D" id="3.40.367.20">
    <property type="match status" value="1"/>
</dbReference>
<dbReference type="HAMAP" id="MF_00524">
    <property type="entry name" value="Glucokinase"/>
    <property type="match status" value="1"/>
</dbReference>
<dbReference type="InterPro" id="IPR043129">
    <property type="entry name" value="ATPase_NBD"/>
</dbReference>
<dbReference type="InterPro" id="IPR050201">
    <property type="entry name" value="Bacterial_glucokinase"/>
</dbReference>
<dbReference type="InterPro" id="IPR003836">
    <property type="entry name" value="Glucokinase"/>
</dbReference>
<dbReference type="NCBIfam" id="TIGR00749">
    <property type="entry name" value="glk"/>
    <property type="match status" value="1"/>
</dbReference>
<dbReference type="NCBIfam" id="NF001414">
    <property type="entry name" value="PRK00292.1-1"/>
    <property type="match status" value="1"/>
</dbReference>
<dbReference type="NCBIfam" id="NF001416">
    <property type="entry name" value="PRK00292.1-3"/>
    <property type="match status" value="1"/>
</dbReference>
<dbReference type="PANTHER" id="PTHR47690">
    <property type="entry name" value="GLUCOKINASE"/>
    <property type="match status" value="1"/>
</dbReference>
<dbReference type="PANTHER" id="PTHR47690:SF1">
    <property type="entry name" value="GLUCOKINASE"/>
    <property type="match status" value="1"/>
</dbReference>
<dbReference type="Pfam" id="PF02685">
    <property type="entry name" value="Glucokinase"/>
    <property type="match status" value="1"/>
</dbReference>
<dbReference type="SUPFAM" id="SSF53067">
    <property type="entry name" value="Actin-like ATPase domain"/>
    <property type="match status" value="1"/>
</dbReference>
<feature type="chain" id="PRO_1000146251" description="Glucokinase">
    <location>
        <begin position="1"/>
        <end position="321"/>
    </location>
</feature>
<feature type="binding site" evidence="1">
    <location>
        <begin position="8"/>
        <end position="13"/>
    </location>
    <ligand>
        <name>ATP</name>
        <dbReference type="ChEBI" id="CHEBI:30616"/>
    </ligand>
</feature>
<name>GLK_ECO55</name>
<reference key="1">
    <citation type="journal article" date="2009" name="PLoS Genet.">
        <title>Organised genome dynamics in the Escherichia coli species results in highly diverse adaptive paths.</title>
        <authorList>
            <person name="Touchon M."/>
            <person name="Hoede C."/>
            <person name="Tenaillon O."/>
            <person name="Barbe V."/>
            <person name="Baeriswyl S."/>
            <person name="Bidet P."/>
            <person name="Bingen E."/>
            <person name="Bonacorsi S."/>
            <person name="Bouchier C."/>
            <person name="Bouvet O."/>
            <person name="Calteau A."/>
            <person name="Chiapello H."/>
            <person name="Clermont O."/>
            <person name="Cruveiller S."/>
            <person name="Danchin A."/>
            <person name="Diard M."/>
            <person name="Dossat C."/>
            <person name="Karoui M.E."/>
            <person name="Frapy E."/>
            <person name="Garry L."/>
            <person name="Ghigo J.M."/>
            <person name="Gilles A.M."/>
            <person name="Johnson J."/>
            <person name="Le Bouguenec C."/>
            <person name="Lescat M."/>
            <person name="Mangenot S."/>
            <person name="Martinez-Jehanne V."/>
            <person name="Matic I."/>
            <person name="Nassif X."/>
            <person name="Oztas S."/>
            <person name="Petit M.A."/>
            <person name="Pichon C."/>
            <person name="Rouy Z."/>
            <person name="Ruf C.S."/>
            <person name="Schneider D."/>
            <person name="Tourret J."/>
            <person name="Vacherie B."/>
            <person name="Vallenet D."/>
            <person name="Medigue C."/>
            <person name="Rocha E.P.C."/>
            <person name="Denamur E."/>
        </authorList>
    </citation>
    <scope>NUCLEOTIDE SEQUENCE [LARGE SCALE GENOMIC DNA]</scope>
    <source>
        <strain>55989 / EAEC</strain>
    </source>
</reference>
<accession>B7LCE0</accession>
<evidence type="ECO:0000255" key="1">
    <source>
        <dbReference type="HAMAP-Rule" id="MF_00524"/>
    </source>
</evidence>
<gene>
    <name evidence="1" type="primary">glk</name>
    <name type="ordered locus">EC55989_2684</name>
</gene>
<keyword id="KW-0067">ATP-binding</keyword>
<keyword id="KW-0963">Cytoplasm</keyword>
<keyword id="KW-0324">Glycolysis</keyword>
<keyword id="KW-0418">Kinase</keyword>
<keyword id="KW-0547">Nucleotide-binding</keyword>
<keyword id="KW-1185">Reference proteome</keyword>
<keyword id="KW-0808">Transferase</keyword>
<organism>
    <name type="scientific">Escherichia coli (strain 55989 / EAEC)</name>
    <dbReference type="NCBI Taxonomy" id="585055"/>
    <lineage>
        <taxon>Bacteria</taxon>
        <taxon>Pseudomonadati</taxon>
        <taxon>Pseudomonadota</taxon>
        <taxon>Gammaproteobacteria</taxon>
        <taxon>Enterobacterales</taxon>
        <taxon>Enterobacteriaceae</taxon>
        <taxon>Escherichia</taxon>
    </lineage>
</organism>
<proteinExistence type="inferred from homology"/>
<sequence length="321" mass="34723">MTKYALVGDVGGTNARLALCDIASGEISQAKTYSGLDYPSLEAVIRVYLEEHKVEVKDGCIAIACPITGDWVAMTNHTWAFSIAEMKKNLGFSHLEIINDFTAVSMAIPMLKKEHLIQFGGAEPVEGKPIAVYGAGTGLGVAHLVHVDKRWVSLPGEGGHVDFAPNSEEEAIILEILRAEIGHVSAERVLSGPGLVNLYRAIVKADNRLPENLKPKDITERALADSCTDCRRALSLFCVIMGRFGGNLALNLGTFGGVFIAGGIVPRFLEFFKASGFRAAFEDKGRFKEYVHDIPVYLIVHDNPGLLGSGAHLRQTLGHIL</sequence>
<protein>
    <recommendedName>
        <fullName evidence="1">Glucokinase</fullName>
        <ecNumber evidence="1">2.7.1.2</ecNumber>
    </recommendedName>
    <alternativeName>
        <fullName evidence="1">Glucose kinase</fullName>
    </alternativeName>
</protein>